<feature type="signal peptide" evidence="1">
    <location>
        <begin position="1"/>
        <end position="25"/>
    </location>
</feature>
<feature type="chain" id="PRO_0000322014" description="Maltoporin 2">
    <location>
        <begin position="26"/>
        <end position="429"/>
    </location>
</feature>
<feature type="region of interest" description="Disordered" evidence="2">
    <location>
        <begin position="397"/>
        <end position="416"/>
    </location>
</feature>
<feature type="compositionally biased region" description="Polar residues" evidence="2">
    <location>
        <begin position="397"/>
        <end position="412"/>
    </location>
</feature>
<feature type="site" description="Greasy slide, important in sugar transport" evidence="1">
    <location>
        <position position="31"/>
    </location>
</feature>
<feature type="site" description="Greasy slide, important in sugar transport" evidence="1">
    <location>
        <position position="66"/>
    </location>
</feature>
<feature type="site" description="Greasy slide, important in sugar transport" evidence="1">
    <location>
        <position position="99"/>
    </location>
</feature>
<feature type="site" description="Important in sugar transport" evidence="1">
    <location>
        <position position="143"/>
    </location>
</feature>
<feature type="site" description="Greasy slide, important in sugar transport" evidence="1">
    <location>
        <position position="252"/>
    </location>
</feature>
<feature type="site" description="Greasy slide, important in sugar transport" evidence="1">
    <location>
        <position position="372"/>
    </location>
</feature>
<feature type="site" description="Greasy slide, important in sugar transport" evidence="1">
    <location>
        <position position="428"/>
    </location>
</feature>
<proteinExistence type="inferred from homology"/>
<gene>
    <name evidence="1" type="primary">lamB2</name>
    <name type="ordered locus">KPN78578_43560</name>
    <name type="ORF">KPN_04425</name>
</gene>
<organism>
    <name type="scientific">Klebsiella pneumoniae subsp. pneumoniae (strain ATCC 700721 / MGH 78578)</name>
    <dbReference type="NCBI Taxonomy" id="272620"/>
    <lineage>
        <taxon>Bacteria</taxon>
        <taxon>Pseudomonadati</taxon>
        <taxon>Pseudomonadota</taxon>
        <taxon>Gammaproteobacteria</taxon>
        <taxon>Enterobacterales</taxon>
        <taxon>Enterobacteriaceae</taxon>
        <taxon>Klebsiella/Raoultella group</taxon>
        <taxon>Klebsiella</taxon>
        <taxon>Klebsiella pneumoniae complex</taxon>
    </lineage>
</organism>
<accession>A6TGU6</accession>
<evidence type="ECO:0000255" key="1">
    <source>
        <dbReference type="HAMAP-Rule" id="MF_01301"/>
    </source>
</evidence>
<evidence type="ECO:0000256" key="2">
    <source>
        <dbReference type="SAM" id="MobiDB-lite"/>
    </source>
</evidence>
<protein>
    <recommendedName>
        <fullName evidence="1">Maltoporin 2</fullName>
    </recommendedName>
    <alternativeName>
        <fullName evidence="1">Maltose-inducible porin 2</fullName>
    </alternativeName>
</protein>
<sequence>MMITLRKLPLAVAVAAGVMSAQALAVDFHGYARSGIGWTGSGGEQQCFKATGAQSKYRLGNECETYAELKLGQELWKEGDKSFYFDTNVAYSVNQEDDWESTSPAFREANIQGKNLIDWLPGSTLWAGKRFYQRHDVHMIDFYYWDISGPGAGLENVDLGFGKLSLAATRNSESGGSYTFSSDDTKKYAAKTANDVFDIRLAGLETNPGGVLELGVDYGRANPQDDYRLEDGASKDGWMWTGEHTQSIWGGFNKFVVQYATDAMTSWNSGHSQGTSIDNNGSMIRVLDHGAMDFNDDWGLMYVAMYQDVDLDSKNGSTWYTVGVRPMYKWTPIMSTQLEIGYDNVKSQRTSENNNQYKITLAQQWQAGNSVWSRPAIRIFATYAKWDENWGYSNTSGLQTKDSSGSGAFTSSRGDDSEVTFGAQMEVWW</sequence>
<dbReference type="EMBL" id="CP000647">
    <property type="protein sequence ID" value="ABR79780.1"/>
    <property type="molecule type" value="Genomic_DNA"/>
</dbReference>
<dbReference type="RefSeq" id="WP_002884747.1">
    <property type="nucleotide sequence ID" value="NC_009648.1"/>
</dbReference>
<dbReference type="SMR" id="A6TGU6"/>
<dbReference type="STRING" id="272620.KPN_04425"/>
<dbReference type="PaxDb" id="272620-KPN_04425"/>
<dbReference type="EnsemblBacteria" id="ABR79780">
    <property type="protein sequence ID" value="ABR79780"/>
    <property type="gene ID" value="KPN_04425"/>
</dbReference>
<dbReference type="KEGG" id="kpn:KPN_04425"/>
<dbReference type="HOGENOM" id="CLU_032473_4_1_6"/>
<dbReference type="Proteomes" id="UP000000265">
    <property type="component" value="Chromosome"/>
</dbReference>
<dbReference type="GO" id="GO:0009279">
    <property type="term" value="C:cell outer membrane"/>
    <property type="evidence" value="ECO:0007669"/>
    <property type="project" value="UniProtKB-SubCell"/>
</dbReference>
<dbReference type="GO" id="GO:0046930">
    <property type="term" value="C:pore complex"/>
    <property type="evidence" value="ECO:0007669"/>
    <property type="project" value="UniProtKB-KW"/>
</dbReference>
<dbReference type="GO" id="GO:0042958">
    <property type="term" value="F:maltodextrin transmembrane transporter activity"/>
    <property type="evidence" value="ECO:0007669"/>
    <property type="project" value="InterPro"/>
</dbReference>
<dbReference type="GO" id="GO:0015481">
    <property type="term" value="F:maltose transporting porin activity"/>
    <property type="evidence" value="ECO:0007669"/>
    <property type="project" value="InterPro"/>
</dbReference>
<dbReference type="GO" id="GO:0006811">
    <property type="term" value="P:monoatomic ion transport"/>
    <property type="evidence" value="ECO:0007669"/>
    <property type="project" value="UniProtKB-KW"/>
</dbReference>
<dbReference type="CDD" id="cd01346">
    <property type="entry name" value="Maltoporin-like"/>
    <property type="match status" value="1"/>
</dbReference>
<dbReference type="Gene3D" id="2.40.170.10">
    <property type="entry name" value="Porin, LamB type"/>
    <property type="match status" value="1"/>
</dbReference>
<dbReference type="HAMAP" id="MF_01301">
    <property type="entry name" value="LamB"/>
    <property type="match status" value="1"/>
</dbReference>
<dbReference type="InterPro" id="IPR050286">
    <property type="entry name" value="G_neg_Bact_CarbUptk_Porin"/>
</dbReference>
<dbReference type="InterPro" id="IPR023738">
    <property type="entry name" value="Maltoporin"/>
</dbReference>
<dbReference type="InterPro" id="IPR003192">
    <property type="entry name" value="Porin_LamB"/>
</dbReference>
<dbReference type="InterPro" id="IPR036998">
    <property type="entry name" value="Porin_LamB_sf"/>
</dbReference>
<dbReference type="NCBIfam" id="NF006860">
    <property type="entry name" value="PRK09360.1"/>
    <property type="match status" value="1"/>
</dbReference>
<dbReference type="PANTHER" id="PTHR38762">
    <property type="entry name" value="CRYPTIC OUTER MEMBRANE PORIN BGLH-RELATED"/>
    <property type="match status" value="1"/>
</dbReference>
<dbReference type="PANTHER" id="PTHR38762:SF1">
    <property type="entry name" value="CRYPTIC OUTER MEMBRANE PORIN BGLH-RELATED"/>
    <property type="match status" value="1"/>
</dbReference>
<dbReference type="Pfam" id="PF02264">
    <property type="entry name" value="LamB"/>
    <property type="match status" value="1"/>
</dbReference>
<dbReference type="SUPFAM" id="SSF56935">
    <property type="entry name" value="Porins"/>
    <property type="match status" value="1"/>
</dbReference>
<reference key="1">
    <citation type="submission" date="2006-09" db="EMBL/GenBank/DDBJ databases">
        <authorList>
            <consortium name="The Klebsiella pneumonia Genome Sequencing Project"/>
            <person name="McClelland M."/>
            <person name="Sanderson E.K."/>
            <person name="Spieth J."/>
            <person name="Clifton W.S."/>
            <person name="Latreille P."/>
            <person name="Sabo A."/>
            <person name="Pepin K."/>
            <person name="Bhonagiri V."/>
            <person name="Porwollik S."/>
            <person name="Ali J."/>
            <person name="Wilson R.K."/>
        </authorList>
    </citation>
    <scope>NUCLEOTIDE SEQUENCE [LARGE SCALE GENOMIC DNA]</scope>
    <source>
        <strain>ATCC 700721 / MGH 78578</strain>
    </source>
</reference>
<name>LAMB2_KLEP7</name>
<keyword id="KW-0998">Cell outer membrane</keyword>
<keyword id="KW-0406">Ion transport</keyword>
<keyword id="KW-0472">Membrane</keyword>
<keyword id="KW-0626">Porin</keyword>
<keyword id="KW-0732">Signal</keyword>
<keyword id="KW-0762">Sugar transport</keyword>
<keyword id="KW-0812">Transmembrane</keyword>
<keyword id="KW-1134">Transmembrane beta strand</keyword>
<keyword id="KW-0813">Transport</keyword>
<comment type="function">
    <text evidence="1">Involved in the transport of maltose and maltodextrins.</text>
</comment>
<comment type="catalytic activity">
    <reaction evidence="1">
        <text>beta-maltose(in) = beta-maltose(out)</text>
        <dbReference type="Rhea" id="RHEA:29731"/>
        <dbReference type="ChEBI" id="CHEBI:18147"/>
    </reaction>
</comment>
<comment type="subunit">
    <text evidence="1">Homotrimer formed of three 18-stranded antiparallel beta-barrels, containing three independent channels.</text>
</comment>
<comment type="subcellular location">
    <subcellularLocation>
        <location evidence="1">Cell outer membrane</location>
        <topology evidence="1">Multi-pass membrane protein</topology>
    </subcellularLocation>
</comment>
<comment type="induction">
    <text evidence="1">By maltose.</text>
</comment>
<comment type="similarity">
    <text evidence="1">Belongs to the porin LamB (TC 1.B.3) family.</text>
</comment>